<protein>
    <recommendedName>
        <fullName>N-acetyllactosaminide beta-1,3-N-acetylglucosaminyltransferase 2</fullName>
        <ecNumber evidence="1">2.4.1.149</ecNumber>
    </recommendedName>
    <alternativeName>
        <fullName>Beta-1,3-N-acetylglucosaminyltransferase 1</fullName>
        <shortName>BGnT-1</shortName>
        <shortName>Beta-1,3-Gn-T1</shortName>
        <shortName>Beta3Gn-T1</shortName>
    </alternativeName>
    <alternativeName>
        <fullName>Beta-1,3-galactosyltransferase 7</fullName>
        <shortName>Beta-1,3-GalTase 7</shortName>
        <shortName>Beta3Gal-T7</shortName>
        <shortName>Beta3GalT7</shortName>
        <shortName>b3Gal-T7</shortName>
    </alternativeName>
    <alternativeName>
        <fullName>Beta-3-Gx-T7</fullName>
    </alternativeName>
    <alternativeName>
        <fullName>UDP-Gal:beta-GlcNAc beta-1,3-galactosyltransferase 7</fullName>
    </alternativeName>
    <alternativeName>
        <fullName>UDP-GlcNAc:betaGal beta-1,3-N-acetylglucosaminyltransferase 2</fullName>
        <shortName>BGnT-2</shortName>
        <shortName>Beta-1,3-Gn-T2</shortName>
        <shortName>Beta-1,3-N-acetylglucosaminyltransferase 2</shortName>
        <shortName>Beta3Gn-T2</shortName>
    </alternativeName>
    <alternativeName>
        <fullName>UDP-galactose:beta-N-acetylglucosamine beta-1,3-galactosyltransferase 7</fullName>
    </alternativeName>
</protein>
<proteinExistence type="evidence at protein level"/>
<accession>Q9Z222</accession>
<accession>Q91V18</accession>
<comment type="function">
    <text evidence="3 8">Beta-1,3-N-acetylglucosaminyltransferase involved in the synthesis of poly-N-acetyllactosamine. Catalyzes the initiation and elongation of poly-N-acetyllactosamine chains (PubMed:9892646). Probably constitutes the main polylactosamine synthase (PubMed:17890318).</text>
</comment>
<comment type="catalytic activity">
    <reaction evidence="1">
        <text>a beta-D-galactosyl-(1-&gt;4)-N-acetyl-beta-D-glucosaminyl derivative + UDP-N-acetyl-alpha-D-glucosamine = an N-acetyl-beta-D-glucosaminyl-(1-&gt;3)-beta-D-galactosyl-(1-&gt;4)-N-acetyl-beta-D-glucosaminyl derivative + UDP + H(+)</text>
        <dbReference type="Rhea" id="RHEA:14389"/>
        <dbReference type="ChEBI" id="CHEBI:15378"/>
        <dbReference type="ChEBI" id="CHEBI:57705"/>
        <dbReference type="ChEBI" id="CHEBI:58223"/>
        <dbReference type="ChEBI" id="CHEBI:133507"/>
        <dbReference type="ChEBI" id="CHEBI:134090"/>
        <dbReference type="EC" id="2.4.1.149"/>
    </reaction>
</comment>
<comment type="cofactor">
    <cofactor evidence="8">
        <name>Mn(2+)</name>
        <dbReference type="ChEBI" id="CHEBI:29035"/>
    </cofactor>
</comment>
<comment type="pathway">
    <text>Protein modification; protein glycosylation.</text>
</comment>
<comment type="subunit">
    <text evidence="5">Interacts with B3GNT8; this interaction greatly increases B3GNT2 catalytic activity, independently of B3GNT8 enzymatic activity.</text>
</comment>
<comment type="subcellular location">
    <subcellularLocation>
        <location evidence="9">Golgi apparatus membrane</location>
        <topology evidence="9">Single-pass type II membrane protein</topology>
    </subcellularLocation>
</comment>
<comment type="tissue specificity">
    <text evidence="8">Expressed in heart, brain, lung, kidney and testis and, to a lesser extent, in liver and skeletal muscle. No expression in spleen.</text>
</comment>
<comment type="disruption phenotype">
    <text evidence="3 4 7">Strongly reduced number polylactosamine structures on N-glycans in immunological tissues. B-cells and T-cells proliferate show hyperproliferation (PubMed:17890318). Mice also display defective accessory olfactory bulb innervation (PubMed:23006775). Impaired sexual behaviour. While female mice are fertile, males show a reduced rate of reproduction. Defects cannot be attributed to any physical defect in their reproductive organs, suggesting that the phenotype observed may result from an impaired sexual response to female mating partners.</text>
</comment>
<comment type="similarity">
    <text evidence="2">Belongs to the glycosyltransferase 31 family.</text>
</comment>
<comment type="caution">
    <text evidence="9">There is some conflicting nomenclature, as some groups still name this protein B3gnt1 (PubMed:18008318). The correct and official nomenclature is however B3gnt2.</text>
</comment>
<comment type="online information" name="Functional Glycomics Gateway - GTase">
    <link uri="http://www.functionalglycomics.org/glycomics/molecule/jsp/glycoEnzyme/viewGlycoEnzyme.jsp?gbpId=gt_mou_472"/>
    <text>MGC32391: hypothetical protein MGC32391/hypothetical protein MGC32391</text>
</comment>
<comment type="online information" name="Functional Glycomics Gateway - GTase">
    <link uri="http://www.functionalglycomics.org/glycomics/molecule/jsp/glycoEnzyme/viewGlycoEnzyme.jsp?gbpId=gt_mou_571"/>
    <text>beta 3 GlcNAc-T I</text>
</comment>
<name>B3GN2_MOUSE</name>
<reference evidence="9" key="1">
    <citation type="journal article" date="1999" name="Proc. Natl. Acad. Sci. U.S.A.">
        <title>A beta-1,3-N-acetylglucosaminyltransferase with poly-N-acetyllactosamine synthase activity is structurally related to beta-1,3-galactosyltransferases.</title>
        <authorList>
            <person name="Zhou D."/>
            <person name="Dinter A."/>
            <person name="Gutierrez Gallego R."/>
            <person name="Kamerling J.P."/>
            <person name="Vliegenthart J.F.G."/>
            <person name="Berger E.G."/>
            <person name="Hennet T."/>
        </authorList>
    </citation>
    <scope>NUCLEOTIDE SEQUENCE [MRNA]</scope>
    <scope>FUNCTION</scope>
    <scope>COFACTOR</scope>
    <scope>TISSUE SPECIFICITY</scope>
    <source>
        <strain evidence="8">ICR</strain>
        <tissue evidence="8">Neonatal brain</tissue>
    </source>
</reference>
<reference evidence="9" key="2">
    <citation type="submission" date="2000-08" db="EMBL/GenBank/DDBJ databases">
        <authorList>
            <person name="Zhou D."/>
            <person name="Berger E.G."/>
            <person name="Hennet T."/>
        </authorList>
    </citation>
    <scope>SEQUENCE REVISION</scope>
</reference>
<reference evidence="11" key="3">
    <citation type="journal article" date="2000" name="Glycoconj. J.">
        <title>Molecular cloning and expression analysis of a mouse UDP-GlcNAc:Gal(beta1-4)Glc(NAc)-R beta1,3-N-acetylglucosaminyltransferase homologous to Drosophila melanogaster Brainiac and the beta1,3-galactosyltransferase family.</title>
        <authorList>
            <person name="Egan S."/>
            <person name="Cohen B."/>
            <person name="Sarkar M."/>
            <person name="Ying Y."/>
            <person name="Cohen S."/>
            <person name="Singh N."/>
            <person name="Wang W."/>
            <person name="Flock G."/>
            <person name="Goh T."/>
            <person name="Schachter H."/>
        </authorList>
    </citation>
    <scope>NUCLEOTIDE SEQUENCE [MRNA]</scope>
    <source>
        <strain evidence="11">C.B17</strain>
    </source>
</reference>
<reference evidence="10" key="4">
    <citation type="journal article" date="2004" name="Genome Res.">
        <title>The status, quality, and expansion of the NIH full-length cDNA project: the Mammalian Gene Collection (MGC).</title>
        <authorList>
            <consortium name="The MGC Project Team"/>
        </authorList>
    </citation>
    <scope>NUCLEOTIDE SEQUENCE [LARGE SCALE MRNA]</scope>
    <source>
        <strain evidence="10">NMRI</strain>
        <tissue evidence="10">Mammary gland</tissue>
    </source>
</reference>
<reference key="5">
    <citation type="journal article" date="2007" name="Proc. Natl. Acad. Sci. U.S.A.">
        <title>Polylactosamine on glycoproteins influences basal levels of lymphocyte and macrophage activation.</title>
        <authorList>
            <person name="Togayachi A."/>
            <person name="Kozono Y."/>
            <person name="Ishida H."/>
            <person name="Abe S."/>
            <person name="Suzuki N."/>
            <person name="Tsunoda Y."/>
            <person name="Hagiwara K."/>
            <person name="Kuno A."/>
            <person name="Ohkura T."/>
            <person name="Sato N."/>
            <person name="Sato T."/>
            <person name="Hirabayashi J."/>
            <person name="Ikehara Y."/>
            <person name="Tachibana K."/>
            <person name="Narimatsu H."/>
        </authorList>
    </citation>
    <scope>DISRUPTION PHENOTYPE</scope>
    <scope>FUNCTION</scope>
</reference>
<reference key="6">
    <citation type="journal article" date="2008" name="J. Biol. Chem.">
        <title>Activation of beta1,3-N-acetylglucosaminyltransferase-2 (beta3Gn-T2) by beta3Gn-T8. Possible involvement of beta3Gn-T8 in increasing poly-N-acetyllactosamine chains in differentiated HL-60 cells.</title>
        <authorList>
            <person name="Seko A."/>
            <person name="Yamashita K."/>
        </authorList>
    </citation>
    <scope>INTERACTION WITH B3GNT8</scope>
</reference>
<reference key="7">
    <citation type="journal article" date="2008" name="Mol. Reprod. Dev.">
        <title>Impaired sexual behavior in male mice deficient for the beta1-3 N-acetylglucosaminyltransferase-I gene.</title>
        <authorList>
            <person name="Biellmann F."/>
            <person name="Henion T.R."/>
            <person name="Burki K."/>
            <person name="Hennet T."/>
        </authorList>
    </citation>
    <scope>DISRUPTION PHENOTYPE</scope>
</reference>
<reference key="8">
    <citation type="journal article" date="2009" name="Nat. Biotechnol.">
        <title>Mass-spectrometric identification and relative quantification of N-linked cell surface glycoproteins.</title>
        <authorList>
            <person name="Wollscheid B."/>
            <person name="Bausch-Fluck D."/>
            <person name="Henderson C."/>
            <person name="O'Brien R."/>
            <person name="Bibel M."/>
            <person name="Schiess R."/>
            <person name="Aebersold R."/>
            <person name="Watts J.D."/>
        </authorList>
    </citation>
    <scope>GLYCOSYLATION [LARGE SCALE ANALYSIS] AT ASN-173</scope>
</reference>
<reference key="9">
    <citation type="journal article" date="2013" name="Mol. Cell. Neurosci.">
        <title>beta3GnT2 null mice exhibit defective accessory olfactory bulb innervation.</title>
        <authorList>
            <person name="Henion T.R."/>
            <person name="Madany P.A."/>
            <person name="Faden A.A."/>
            <person name="Schwarting G.A."/>
        </authorList>
    </citation>
    <scope>DISRUPTION PHENOTYPE</scope>
</reference>
<dbReference type="EC" id="2.4.1.149" evidence="1"/>
<dbReference type="EMBL" id="AF092050">
    <property type="protein sequence ID" value="AAD09763.2"/>
    <property type="molecule type" value="mRNA"/>
</dbReference>
<dbReference type="EMBL" id="AY043479">
    <property type="protein sequence ID" value="AAK95359.1"/>
    <property type="molecule type" value="mRNA"/>
</dbReference>
<dbReference type="EMBL" id="BC009075">
    <property type="protein sequence ID" value="AAH09075.1"/>
    <property type="molecule type" value="mRNA"/>
</dbReference>
<dbReference type="CCDS" id="CCDS24471.1"/>
<dbReference type="RefSeq" id="NP_001162585.1">
    <property type="nucleotide sequence ID" value="NM_001169114.1"/>
</dbReference>
<dbReference type="RefSeq" id="NP_058584.3">
    <property type="nucleotide sequence ID" value="NM_016888.5"/>
</dbReference>
<dbReference type="SMR" id="Q9Z222"/>
<dbReference type="FunCoup" id="Q9Z222">
    <property type="interactions" value="588"/>
</dbReference>
<dbReference type="IntAct" id="Q9Z222">
    <property type="interactions" value="2"/>
</dbReference>
<dbReference type="STRING" id="10090.ENSMUSP00000060247"/>
<dbReference type="CAZy" id="GT31">
    <property type="family name" value="Glycosyltransferase Family 31"/>
</dbReference>
<dbReference type="GlyCosmos" id="Q9Z222">
    <property type="glycosylation" value="6 sites, No reported glycans"/>
</dbReference>
<dbReference type="GlyGen" id="Q9Z222">
    <property type="glycosylation" value="6 sites, 2 N-linked glycans (3 sites)"/>
</dbReference>
<dbReference type="iPTMnet" id="Q9Z222"/>
<dbReference type="PhosphoSitePlus" id="Q9Z222"/>
<dbReference type="PaxDb" id="10090-ENSMUSP00000060247"/>
<dbReference type="ProteomicsDB" id="277148"/>
<dbReference type="Antibodypedia" id="1107">
    <property type="antibodies" value="191 antibodies from 26 providers"/>
</dbReference>
<dbReference type="DNASU" id="53625"/>
<dbReference type="Ensembl" id="ENSMUST00000055549.4">
    <property type="protein sequence ID" value="ENSMUSP00000053528.4"/>
    <property type="gene ID" value="ENSMUSG00000051650.12"/>
</dbReference>
<dbReference type="Ensembl" id="ENSMUST00000062844.11">
    <property type="protein sequence ID" value="ENSMUSP00000060247.11"/>
    <property type="gene ID" value="ENSMUSG00000051650.12"/>
</dbReference>
<dbReference type="GeneID" id="53625"/>
<dbReference type="KEGG" id="mmu:53625"/>
<dbReference type="UCSC" id="uc007ieh.2">
    <property type="organism name" value="mouse"/>
</dbReference>
<dbReference type="AGR" id="MGI:1889505"/>
<dbReference type="CTD" id="10678"/>
<dbReference type="MGI" id="MGI:1889505">
    <property type="gene designation" value="B3gnt2"/>
</dbReference>
<dbReference type="VEuPathDB" id="HostDB:ENSMUSG00000051650"/>
<dbReference type="eggNOG" id="KOG2287">
    <property type="taxonomic scope" value="Eukaryota"/>
</dbReference>
<dbReference type="GeneTree" id="ENSGT00940000155345"/>
<dbReference type="HOGENOM" id="CLU_036849_5_0_1"/>
<dbReference type="InParanoid" id="Q9Z222"/>
<dbReference type="OMA" id="VSHLNYC"/>
<dbReference type="OrthoDB" id="2139606at2759"/>
<dbReference type="PhylomeDB" id="Q9Z222"/>
<dbReference type="TreeFam" id="TF318639"/>
<dbReference type="Reactome" id="R-MMU-2022854">
    <property type="pathway name" value="Keratan sulfate biosynthesis"/>
</dbReference>
<dbReference type="Reactome" id="R-MMU-913709">
    <property type="pathway name" value="O-linked glycosylation of mucins"/>
</dbReference>
<dbReference type="UniPathway" id="UPA00378"/>
<dbReference type="BioGRID-ORCS" id="53625">
    <property type="hits" value="5 hits in 46 CRISPR screens"/>
</dbReference>
<dbReference type="ChiTaRS" id="B3gnt2">
    <property type="organism name" value="mouse"/>
</dbReference>
<dbReference type="PRO" id="PR:Q9Z222"/>
<dbReference type="Proteomes" id="UP000000589">
    <property type="component" value="Chromosome 11"/>
</dbReference>
<dbReference type="RNAct" id="Q9Z222">
    <property type="molecule type" value="protein"/>
</dbReference>
<dbReference type="Bgee" id="ENSMUSG00000051650">
    <property type="expression patterns" value="Expressed in primary oocyte and 76 other cell types or tissues"/>
</dbReference>
<dbReference type="ExpressionAtlas" id="Q9Z222">
    <property type="expression patterns" value="baseline and differential"/>
</dbReference>
<dbReference type="GO" id="GO:0000139">
    <property type="term" value="C:Golgi membrane"/>
    <property type="evidence" value="ECO:0007669"/>
    <property type="project" value="UniProtKB-SubCell"/>
</dbReference>
<dbReference type="GO" id="GO:0008532">
    <property type="term" value="F:N-acetyllactosaminide beta-1,3-N-acetylglucosaminyltransferase activity"/>
    <property type="evidence" value="ECO:0000250"/>
    <property type="project" value="UniProtKB"/>
</dbReference>
<dbReference type="GO" id="GO:0007411">
    <property type="term" value="P:axon guidance"/>
    <property type="evidence" value="ECO:0000315"/>
    <property type="project" value="MGI"/>
</dbReference>
<dbReference type="GO" id="GO:1990830">
    <property type="term" value="P:cellular response to leukemia inhibitory factor"/>
    <property type="evidence" value="ECO:0000270"/>
    <property type="project" value="MGI"/>
</dbReference>
<dbReference type="GO" id="GO:0030311">
    <property type="term" value="P:poly-N-acetyllactosamine biosynthetic process"/>
    <property type="evidence" value="ECO:0000250"/>
    <property type="project" value="UniProtKB"/>
</dbReference>
<dbReference type="GO" id="GO:0006486">
    <property type="term" value="P:protein glycosylation"/>
    <property type="evidence" value="ECO:0000315"/>
    <property type="project" value="MGI"/>
</dbReference>
<dbReference type="GO" id="GO:0007608">
    <property type="term" value="P:sensory perception of smell"/>
    <property type="evidence" value="ECO:0000315"/>
    <property type="project" value="MGI"/>
</dbReference>
<dbReference type="FunFam" id="3.90.550.50:FF:000010">
    <property type="entry name" value="Hexosyltransferase"/>
    <property type="match status" value="1"/>
</dbReference>
<dbReference type="Gene3D" id="3.90.550.50">
    <property type="match status" value="1"/>
</dbReference>
<dbReference type="InterPro" id="IPR002659">
    <property type="entry name" value="Glyco_trans_31"/>
</dbReference>
<dbReference type="PANTHER" id="PTHR11214">
    <property type="entry name" value="BETA-1,3-N-ACETYLGLUCOSAMINYLTRANSFERASE"/>
    <property type="match status" value="1"/>
</dbReference>
<dbReference type="PANTHER" id="PTHR11214:SF25">
    <property type="entry name" value="N-ACETYLLACTOSAMINIDE BETA-1,3-N-ACETYLGLUCOSAMINYLTRANSFERASE 2"/>
    <property type="match status" value="1"/>
</dbReference>
<dbReference type="Pfam" id="PF01762">
    <property type="entry name" value="Galactosyl_T"/>
    <property type="match status" value="1"/>
</dbReference>
<sequence length="397" mass="45883">MSVGRRRVKLLGILMMANVFIYLIVEVSKNSSQDKNGKGGVIIPKEKFWKPPSTPRAYWNREQEKLNRWYNPILNRVANQTGELATSPNTSHLSYCEPDSTVMTAVTDFNNLPDRFKDFLLYLRCRNYSLLIDQPKKCAKKPFLLLAIKSLIPHFARRQAIRESWGRETNVGNQTVVRVFLLGKTPPEDNHPDLSDMLKFESDKHQDILMWNYRDTFFNLSLKEVLFLRWVSTSCPDAEFVFKGDDDVFVNTHHILNYLNSLSKSKAKDLFIGDVIHNAGPHRDKKLKYYIPEVFYTGVYPPYAGGGGFLYSGPLALRLYSATSRVHLYPIDDVYTGMCLQKLGLVPEKHKGFRTFDIEEKNKKNICSYIDLMLVHSRKPQEMIDIWSQLQSPNLKC</sequence>
<keyword id="KW-0325">Glycoprotein</keyword>
<keyword id="KW-0328">Glycosyltransferase</keyword>
<keyword id="KW-0333">Golgi apparatus</keyword>
<keyword id="KW-0464">Manganese</keyword>
<keyword id="KW-0472">Membrane</keyword>
<keyword id="KW-1185">Reference proteome</keyword>
<keyword id="KW-0735">Signal-anchor</keyword>
<keyword id="KW-0808">Transferase</keyword>
<keyword id="KW-0812">Transmembrane</keyword>
<keyword id="KW-1133">Transmembrane helix</keyword>
<feature type="chain" id="PRO_0000219171" description="N-acetyllactosaminide beta-1,3-N-acetylglucosaminyltransferase 2">
    <location>
        <begin position="1"/>
        <end position="397"/>
    </location>
</feature>
<feature type="topological domain" description="Cytoplasmic" evidence="2">
    <location>
        <begin position="1"/>
        <end position="7"/>
    </location>
</feature>
<feature type="transmembrane region" description="Helical; Signal-anchor for type II membrane protein" evidence="2">
    <location>
        <begin position="8"/>
        <end position="28"/>
    </location>
</feature>
<feature type="topological domain" description="Lumenal" evidence="2">
    <location>
        <begin position="29"/>
        <end position="325"/>
    </location>
</feature>
<feature type="glycosylation site" description="N-linked (GlcNAc...) asparagine" evidence="2">
    <location>
        <position position="30"/>
    </location>
</feature>
<feature type="glycosylation site" description="N-linked (GlcNAc...) asparagine" evidence="2">
    <location>
        <position position="79"/>
    </location>
</feature>
<feature type="glycosylation site" description="N-linked (GlcNAc...) asparagine" evidence="2">
    <location>
        <position position="89"/>
    </location>
</feature>
<feature type="glycosylation site" description="N-linked (GlcNAc...) asparagine" evidence="2">
    <location>
        <position position="127"/>
    </location>
</feature>
<feature type="glycosylation site" description="N-linked (GlcNAc...) asparagine" evidence="6">
    <location>
        <position position="173"/>
    </location>
</feature>
<feature type="glycosylation site" description="N-linked (GlcNAc...) asparagine" evidence="2">
    <location>
        <position position="219"/>
    </location>
</feature>
<feature type="sequence conflict" description="In Ref. 2; AAD09763." evidence="9" ref="2">
    <original>R</original>
    <variation>S</variation>
    <location>
        <position position="283"/>
    </location>
</feature>
<evidence type="ECO:0000250" key="1">
    <source>
        <dbReference type="UniProtKB" id="Q9NY97"/>
    </source>
</evidence>
<evidence type="ECO:0000255" key="2"/>
<evidence type="ECO:0000269" key="3">
    <source>
    </source>
</evidence>
<evidence type="ECO:0000269" key="4">
    <source>
    </source>
</evidence>
<evidence type="ECO:0000269" key="5">
    <source>
    </source>
</evidence>
<evidence type="ECO:0000269" key="6">
    <source>
    </source>
</evidence>
<evidence type="ECO:0000269" key="7">
    <source>
    </source>
</evidence>
<evidence type="ECO:0000269" key="8">
    <source>
    </source>
</evidence>
<evidence type="ECO:0000305" key="9"/>
<evidence type="ECO:0000312" key="10">
    <source>
        <dbReference type="EMBL" id="AAH09075.1"/>
    </source>
</evidence>
<evidence type="ECO:0000312" key="11">
    <source>
        <dbReference type="EMBL" id="AAK95359.1"/>
    </source>
</evidence>
<gene>
    <name type="primary">B3GNT2</name>
    <name type="synonym">B3gnt1</name>
    <name type="synonym">Beta3gnt</name>
</gene>
<organism>
    <name type="scientific">Mus musculus</name>
    <name type="common">Mouse</name>
    <dbReference type="NCBI Taxonomy" id="10090"/>
    <lineage>
        <taxon>Eukaryota</taxon>
        <taxon>Metazoa</taxon>
        <taxon>Chordata</taxon>
        <taxon>Craniata</taxon>
        <taxon>Vertebrata</taxon>
        <taxon>Euteleostomi</taxon>
        <taxon>Mammalia</taxon>
        <taxon>Eutheria</taxon>
        <taxon>Euarchontoglires</taxon>
        <taxon>Glires</taxon>
        <taxon>Rodentia</taxon>
        <taxon>Myomorpha</taxon>
        <taxon>Muroidea</taxon>
        <taxon>Muridae</taxon>
        <taxon>Murinae</taxon>
        <taxon>Mus</taxon>
        <taxon>Mus</taxon>
    </lineage>
</organism>